<sequence length="398" mass="45616">MVAGIHSLLLLQFYQILLSGCTGLVPEEGKRKYSESTRSSPQQSQQVLDQFELRLLNMFGLKRRPTPGKNVVIPPYMLDLYHLHSAQLADDQGSSEVDYHMERAASRANTVRSFHHEESMEEIPESGEKTIQRFFFNLSSIPDEELVTSSELRIFREQVQEPFKTDGSKLHRINIYDIVKPAAAASRGPVVRLLDTRLIHHNESKWESFDVTPAITRWIAHKQPNHGFVVEVTHLDNDTNVPKRHVRISRSLTLDKGHWPRIRPLLVTFSHDGKGHALHKRQKRQARHKQRKRLKSSCRRHPLYVDFSDVGWNDWIVAPPGYHAFYCHGECPFPLADHLNSTNHAIVQTLVNSVNTNIPKACCVPTELSAISMLYLDENEKVVLKNYQDMVVEGCGCR</sequence>
<reference key="1">
    <citation type="journal article" date="1992" name="Biochem. Biophys. Res. Commun.">
        <title>Genes for bone morphogenetic proteins are differentially transcribed in early amphibian embryos.</title>
        <authorList>
            <person name="Nishimatsu S."/>
            <person name="Suzuki A."/>
            <person name="Shoda A."/>
            <person name="Murakami K."/>
            <person name="Ueno N."/>
        </authorList>
    </citation>
    <scope>NUCLEOTIDE SEQUENCE [MRNA]</scope>
    <source>
        <tissue>Oocyte</tissue>
    </source>
</reference>
<reference key="2">
    <citation type="journal article" date="2001" name="Mech. Dev.">
        <title>Structure and expression of Xenopus tropicalis BMP-2 and BMP-4 genes.</title>
        <authorList>
            <person name="Knoechel S."/>
            <person name="Dillinger K."/>
            <person name="Koester M."/>
            <person name="Knoechel W."/>
        </authorList>
    </citation>
    <scope>NUCLEOTIDE SEQUENCE [GENOMIC DNA]</scope>
</reference>
<organism>
    <name type="scientific">Xenopus laevis</name>
    <name type="common">African clawed frog</name>
    <dbReference type="NCBI Taxonomy" id="8355"/>
    <lineage>
        <taxon>Eukaryota</taxon>
        <taxon>Metazoa</taxon>
        <taxon>Chordata</taxon>
        <taxon>Craniata</taxon>
        <taxon>Vertebrata</taxon>
        <taxon>Euteleostomi</taxon>
        <taxon>Amphibia</taxon>
        <taxon>Batrachia</taxon>
        <taxon>Anura</taxon>
        <taxon>Pipoidea</taxon>
        <taxon>Pipidae</taxon>
        <taxon>Xenopodinae</taxon>
        <taxon>Xenopus</taxon>
        <taxon>Xenopus</taxon>
    </lineage>
</organism>
<accession>P30884</accession>
<proteinExistence type="evidence at transcript level"/>
<comment type="function">
    <text>Induces cartilage and bone formation.</text>
</comment>
<comment type="subunit">
    <text evidence="2">Homodimer; disulfide-linked.</text>
</comment>
<comment type="subcellular location">
    <subcellularLocation>
        <location evidence="1">Secreted</location>
    </subcellularLocation>
</comment>
<comment type="similarity">
    <text evidence="4">Belongs to the TGF-beta family.</text>
</comment>
<protein>
    <recommendedName>
        <fullName>Bone morphogenetic protein 2-B</fullName>
    </recommendedName>
    <alternativeName>
        <fullName>BMP-2-II</fullName>
    </alternativeName>
</protein>
<gene>
    <name type="primary">bmp2-b</name>
</gene>
<evidence type="ECO:0000250" key="1"/>
<evidence type="ECO:0000250" key="2">
    <source>
        <dbReference type="UniProtKB" id="P12643"/>
    </source>
</evidence>
<evidence type="ECO:0000255" key="3"/>
<evidence type="ECO:0000305" key="4"/>
<keyword id="KW-0891">Chondrogenesis</keyword>
<keyword id="KW-0165">Cleavage on pair of basic residues</keyword>
<keyword id="KW-0202">Cytokine</keyword>
<keyword id="KW-0217">Developmental protein</keyword>
<keyword id="KW-0221">Differentiation</keyword>
<keyword id="KW-1015">Disulfide bond</keyword>
<keyword id="KW-0325">Glycoprotein</keyword>
<keyword id="KW-0339">Growth factor</keyword>
<keyword id="KW-0892">Osteogenesis</keyword>
<keyword id="KW-1185">Reference proteome</keyword>
<keyword id="KW-0964">Secreted</keyword>
<keyword id="KW-0732">Signal</keyword>
<feature type="signal peptide" evidence="3">
    <location>
        <begin position="1"/>
        <end position="23"/>
    </location>
</feature>
<feature type="propeptide" id="PRO_0000033834" evidence="3">
    <location>
        <begin position="24"/>
        <end position="284"/>
    </location>
</feature>
<feature type="chain" id="PRO_0000033835" description="Bone morphogenetic protein 2-B">
    <location>
        <begin position="285"/>
        <end position="398"/>
    </location>
</feature>
<feature type="glycosylation site" description="N-linked (GlcNAc...) asparagine" evidence="3">
    <location>
        <position position="137"/>
    </location>
</feature>
<feature type="glycosylation site" description="N-linked (GlcNAc...) asparagine" evidence="3">
    <location>
        <position position="202"/>
    </location>
</feature>
<feature type="glycosylation site" description="N-linked (GlcNAc...) asparagine" evidence="3">
    <location>
        <position position="237"/>
    </location>
</feature>
<feature type="glycosylation site" description="N-linked (GlcNAc...) asparagine" evidence="3">
    <location>
        <position position="340"/>
    </location>
</feature>
<feature type="disulfide bond" evidence="1">
    <location>
        <begin position="298"/>
        <end position="363"/>
    </location>
</feature>
<feature type="disulfide bond" evidence="1">
    <location>
        <begin position="327"/>
        <end position="395"/>
    </location>
</feature>
<feature type="disulfide bond" evidence="1">
    <location>
        <begin position="331"/>
        <end position="397"/>
    </location>
</feature>
<feature type="disulfide bond" description="Interchain" evidence="1">
    <location>
        <position position="362"/>
    </location>
</feature>
<dbReference type="EMBL" id="X63425">
    <property type="protein sequence ID" value="CAA45019.1"/>
    <property type="molecule type" value="mRNA"/>
</dbReference>
<dbReference type="EMBL" id="AJ315159">
    <property type="protein sequence ID" value="CAC44177.1"/>
    <property type="molecule type" value="Genomic_DNA"/>
</dbReference>
<dbReference type="PIR" id="JH0688">
    <property type="entry name" value="JH0688"/>
</dbReference>
<dbReference type="RefSeq" id="NP_001095136.1">
    <property type="nucleotide sequence ID" value="NM_001101666.1"/>
</dbReference>
<dbReference type="SMR" id="P30884"/>
<dbReference type="GlyCosmos" id="P30884">
    <property type="glycosylation" value="4 sites, No reported glycans"/>
</dbReference>
<dbReference type="GeneID" id="397873"/>
<dbReference type="KEGG" id="xla:397873"/>
<dbReference type="AGR" id="Xenbase:XB-GENE-6252323"/>
<dbReference type="CTD" id="397873"/>
<dbReference type="Xenbase" id="XB-GENE-6252323">
    <property type="gene designation" value="bmp2.L"/>
</dbReference>
<dbReference type="OrthoDB" id="5987191at2759"/>
<dbReference type="Proteomes" id="UP000186698">
    <property type="component" value="Chromosome 5L"/>
</dbReference>
<dbReference type="Bgee" id="397873">
    <property type="expression patterns" value="Expressed in blastula and 13 other cell types or tissues"/>
</dbReference>
<dbReference type="GO" id="GO:0005615">
    <property type="term" value="C:extracellular space"/>
    <property type="evidence" value="ECO:0000318"/>
    <property type="project" value="GO_Central"/>
</dbReference>
<dbReference type="GO" id="GO:0005125">
    <property type="term" value="F:cytokine activity"/>
    <property type="evidence" value="ECO:0000318"/>
    <property type="project" value="GO_Central"/>
</dbReference>
<dbReference type="GO" id="GO:0008083">
    <property type="term" value="F:growth factor activity"/>
    <property type="evidence" value="ECO:0007669"/>
    <property type="project" value="UniProtKB-KW"/>
</dbReference>
<dbReference type="GO" id="GO:0051216">
    <property type="term" value="P:cartilage development"/>
    <property type="evidence" value="ECO:0007669"/>
    <property type="project" value="UniProtKB-KW"/>
</dbReference>
<dbReference type="GO" id="GO:0030154">
    <property type="term" value="P:cell differentiation"/>
    <property type="evidence" value="ECO:0007669"/>
    <property type="project" value="UniProtKB-KW"/>
</dbReference>
<dbReference type="GO" id="GO:0001503">
    <property type="term" value="P:ossification"/>
    <property type="evidence" value="ECO:0007669"/>
    <property type="project" value="UniProtKB-KW"/>
</dbReference>
<dbReference type="CDD" id="cd19390">
    <property type="entry name" value="TGF_beta_BMP2"/>
    <property type="match status" value="1"/>
</dbReference>
<dbReference type="FunFam" id="2.10.90.10:FF:000103">
    <property type="entry name" value="Bone morphogenetic protein 16"/>
    <property type="match status" value="1"/>
</dbReference>
<dbReference type="FunFam" id="2.60.120.970:FF:000009">
    <property type="entry name" value="bone morphogenetic protein 2"/>
    <property type="match status" value="1"/>
</dbReference>
<dbReference type="Gene3D" id="2.60.120.970">
    <property type="match status" value="1"/>
</dbReference>
<dbReference type="Gene3D" id="2.10.90.10">
    <property type="entry name" value="Cystine-knot cytokines"/>
    <property type="match status" value="1"/>
</dbReference>
<dbReference type="InterPro" id="IPR047953">
    <property type="entry name" value="BMP2_TGF_beta-like"/>
</dbReference>
<dbReference type="InterPro" id="IPR029034">
    <property type="entry name" value="Cystine-knot_cytokine"/>
</dbReference>
<dbReference type="InterPro" id="IPR001839">
    <property type="entry name" value="TGF-b_C"/>
</dbReference>
<dbReference type="InterPro" id="IPR001111">
    <property type="entry name" value="TGF-b_propeptide"/>
</dbReference>
<dbReference type="InterPro" id="IPR015615">
    <property type="entry name" value="TGF-beta-rel"/>
</dbReference>
<dbReference type="InterPro" id="IPR017948">
    <property type="entry name" value="TGFb_CS"/>
</dbReference>
<dbReference type="PANTHER" id="PTHR11848:SF143">
    <property type="entry name" value="BONE MORPHOGENETIC PROTEIN 2"/>
    <property type="match status" value="1"/>
</dbReference>
<dbReference type="PANTHER" id="PTHR11848">
    <property type="entry name" value="TGF-BETA FAMILY"/>
    <property type="match status" value="1"/>
</dbReference>
<dbReference type="Pfam" id="PF00019">
    <property type="entry name" value="TGF_beta"/>
    <property type="match status" value="1"/>
</dbReference>
<dbReference type="Pfam" id="PF00688">
    <property type="entry name" value="TGFb_propeptide"/>
    <property type="match status" value="1"/>
</dbReference>
<dbReference type="PRINTS" id="PR00669">
    <property type="entry name" value="INHIBINA"/>
</dbReference>
<dbReference type="SMART" id="SM00204">
    <property type="entry name" value="TGFB"/>
    <property type="match status" value="1"/>
</dbReference>
<dbReference type="SUPFAM" id="SSF57501">
    <property type="entry name" value="Cystine-knot cytokines"/>
    <property type="match status" value="1"/>
</dbReference>
<dbReference type="PROSITE" id="PS00250">
    <property type="entry name" value="TGF_BETA_1"/>
    <property type="match status" value="1"/>
</dbReference>
<dbReference type="PROSITE" id="PS51362">
    <property type="entry name" value="TGF_BETA_2"/>
    <property type="match status" value="1"/>
</dbReference>
<name>BMP2B_XENLA</name>